<proteinExistence type="evidence at protein level"/>
<organism>
    <name type="scientific">Pseudomonas aeruginosa (strain ATCC 15692 / DSM 22644 / CIP 104116 / JCM 14847 / LMG 12228 / 1C / PRS 101 / PAO1)</name>
    <dbReference type="NCBI Taxonomy" id="208964"/>
    <lineage>
        <taxon>Bacteria</taxon>
        <taxon>Pseudomonadati</taxon>
        <taxon>Pseudomonadota</taxon>
        <taxon>Gammaproteobacteria</taxon>
        <taxon>Pseudomonadales</taxon>
        <taxon>Pseudomonadaceae</taxon>
        <taxon>Pseudomonas</taxon>
    </lineage>
</organism>
<name>LPXC_PSEAE</name>
<gene>
    <name evidence="1" type="primary">lpxC</name>
    <name type="synonym">envA</name>
    <name type="ordered locus">PA4406</name>
</gene>
<keyword id="KW-0002">3D-structure</keyword>
<keyword id="KW-0378">Hydrolase</keyword>
<keyword id="KW-0441">Lipid A biosynthesis</keyword>
<keyword id="KW-0444">Lipid biosynthesis</keyword>
<keyword id="KW-0443">Lipid metabolism</keyword>
<keyword id="KW-0479">Metal-binding</keyword>
<keyword id="KW-1185">Reference proteome</keyword>
<keyword id="KW-0862">Zinc</keyword>
<evidence type="ECO:0000255" key="1">
    <source>
        <dbReference type="HAMAP-Rule" id="MF_00388"/>
    </source>
</evidence>
<evidence type="ECO:0000269" key="2">
    <source>
    </source>
</evidence>
<evidence type="ECO:0007829" key="3">
    <source>
        <dbReference type="PDB" id="3UHM"/>
    </source>
</evidence>
<evidence type="ECO:0007829" key="4">
    <source>
        <dbReference type="PDB" id="7CIC"/>
    </source>
</evidence>
<sequence>MIKQRTLKNIIRATGVGLHSGEKVYLTLKPAPVDTGIVFCRTDLDPVVEIPARAENVGETTMSTTLVKGDVKVDTVEHLLSAMAGLGIDNAYVELSASEVPIMDGSAGPFVFLIQSAGLQEQEAAKKFIRIKREVSVEEGDKRAVFVPFDGFKVSFEIDFDHPVFRGRTQQASVDFSSTSFVKEVSRARTFGFMRDIEYLRSQNLALGGSVENAIVVDENRVLNEDGLRYEDEFVKHKILDAIGDLYLLGNSLIGEFRGFKSGHALNNQLLRTLIADKDAWEVVTFEDARTAPISYMRPAAAV</sequence>
<dbReference type="EC" id="3.5.1.108" evidence="1 2"/>
<dbReference type="EMBL" id="U19797">
    <property type="protein sequence ID" value="AAA95994.2"/>
    <property type="molecule type" value="Genomic_DNA"/>
</dbReference>
<dbReference type="EMBL" id="U67855">
    <property type="protein sequence ID" value="AAC44974.1"/>
    <property type="molecule type" value="Genomic_DNA"/>
</dbReference>
<dbReference type="EMBL" id="AE004091">
    <property type="protein sequence ID" value="AAG07794.1"/>
    <property type="molecule type" value="Genomic_DNA"/>
</dbReference>
<dbReference type="PIR" id="G83093">
    <property type="entry name" value="G83093"/>
</dbReference>
<dbReference type="RefSeq" id="NP_253096.1">
    <property type="nucleotide sequence ID" value="NC_002516.2"/>
</dbReference>
<dbReference type="RefSeq" id="WP_003094111.1">
    <property type="nucleotide sequence ID" value="NZ_QZGE01000004.1"/>
</dbReference>
<dbReference type="PDB" id="2VES">
    <property type="method" value="X-ray"/>
    <property type="resolution" value="1.90 A"/>
    <property type="chains" value="A/B/C=1-299"/>
</dbReference>
<dbReference type="PDB" id="3P3E">
    <property type="method" value="X-ray"/>
    <property type="resolution" value="1.28 A"/>
    <property type="chains" value="A=1-299"/>
</dbReference>
<dbReference type="PDB" id="3U1Y">
    <property type="method" value="X-ray"/>
    <property type="resolution" value="2.00 A"/>
    <property type="chains" value="A/B=1-299"/>
</dbReference>
<dbReference type="PDB" id="3UHM">
    <property type="method" value="X-ray"/>
    <property type="resolution" value="1.26 A"/>
    <property type="chains" value="A=1-299"/>
</dbReference>
<dbReference type="PDB" id="4FW3">
    <property type="method" value="X-ray"/>
    <property type="resolution" value="2.35 A"/>
    <property type="chains" value="A/B/C/D=1-299"/>
</dbReference>
<dbReference type="PDB" id="4FW4">
    <property type="method" value="X-ray"/>
    <property type="resolution" value="2.19 A"/>
    <property type="chains" value="A/B/C/D=1-299"/>
</dbReference>
<dbReference type="PDB" id="4FW5">
    <property type="method" value="X-ray"/>
    <property type="resolution" value="1.99 A"/>
    <property type="chains" value="A/B/C/D=1-299"/>
</dbReference>
<dbReference type="PDB" id="4FW6">
    <property type="method" value="X-ray"/>
    <property type="resolution" value="1.83 A"/>
    <property type="chains" value="A/B/C/D=1-299"/>
</dbReference>
<dbReference type="PDB" id="4FW7">
    <property type="method" value="X-ray"/>
    <property type="resolution" value="1.70 A"/>
    <property type="chains" value="A/B/C/D=1-299"/>
</dbReference>
<dbReference type="PDB" id="4J3D">
    <property type="method" value="X-ray"/>
    <property type="resolution" value="2.00 A"/>
    <property type="chains" value="A/B=1-297"/>
</dbReference>
<dbReference type="PDB" id="4LCF">
    <property type="method" value="X-ray"/>
    <property type="resolution" value="1.60 A"/>
    <property type="chains" value="A=1-299"/>
</dbReference>
<dbReference type="PDB" id="4LCG">
    <property type="method" value="X-ray"/>
    <property type="resolution" value="1.57 A"/>
    <property type="chains" value="A=1-299"/>
</dbReference>
<dbReference type="PDB" id="4LCH">
    <property type="method" value="X-ray"/>
    <property type="resolution" value="1.60 A"/>
    <property type="chains" value="A=1-299"/>
</dbReference>
<dbReference type="PDB" id="4OKG">
    <property type="method" value="X-ray"/>
    <property type="resolution" value="2.06 A"/>
    <property type="chains" value="A/B=1-299"/>
</dbReference>
<dbReference type="PDB" id="5DRQ">
    <property type="method" value="X-ray"/>
    <property type="resolution" value="1.63 A"/>
    <property type="chains" value="A=1-299"/>
</dbReference>
<dbReference type="PDB" id="5DRR">
    <property type="method" value="X-ray"/>
    <property type="resolution" value="1.59 A"/>
    <property type="chains" value="A=1-299"/>
</dbReference>
<dbReference type="PDB" id="5N8C">
    <property type="method" value="X-ray"/>
    <property type="resolution" value="1.90 A"/>
    <property type="chains" value="A/B=1-303"/>
</dbReference>
<dbReference type="PDB" id="5U39">
    <property type="method" value="X-ray"/>
    <property type="resolution" value="1.75 A"/>
    <property type="chains" value="A=2-293"/>
</dbReference>
<dbReference type="PDB" id="5U3B">
    <property type="method" value="X-ray"/>
    <property type="resolution" value="2.00 A"/>
    <property type="chains" value="A/B=1-299"/>
</dbReference>
<dbReference type="PDB" id="5UPG">
    <property type="method" value="X-ray"/>
    <property type="resolution" value="1.70 A"/>
    <property type="chains" value="A=1-303"/>
</dbReference>
<dbReference type="PDB" id="5VWM">
    <property type="method" value="X-ray"/>
    <property type="resolution" value="1.80 A"/>
    <property type="chains" value="A=1-303"/>
</dbReference>
<dbReference type="PDB" id="6C9C">
    <property type="method" value="X-ray"/>
    <property type="resolution" value="2.00 A"/>
    <property type="chains" value="A=1-303"/>
</dbReference>
<dbReference type="PDB" id="6CAX">
    <property type="method" value="X-ray"/>
    <property type="resolution" value="1.25 A"/>
    <property type="chains" value="A=1-303"/>
</dbReference>
<dbReference type="PDB" id="6DUI">
    <property type="method" value="X-ray"/>
    <property type="resolution" value="1.55 A"/>
    <property type="chains" value="A=1-303"/>
</dbReference>
<dbReference type="PDB" id="6E54">
    <property type="method" value="X-ray"/>
    <property type="resolution" value="1.65 A"/>
    <property type="chains" value="A=1-303"/>
</dbReference>
<dbReference type="PDB" id="6I46">
    <property type="method" value="X-ray"/>
    <property type="resolution" value="1.75 A"/>
    <property type="chains" value="AAA=1-299"/>
</dbReference>
<dbReference type="PDB" id="6I47">
    <property type="method" value="X-ray"/>
    <property type="resolution" value="1.90 A"/>
    <property type="chains" value="AAA=1-299"/>
</dbReference>
<dbReference type="PDB" id="6I48">
    <property type="method" value="X-ray"/>
    <property type="resolution" value="2.20 A"/>
    <property type="chains" value="AAA=1-299"/>
</dbReference>
<dbReference type="PDB" id="6I49">
    <property type="method" value="X-ray"/>
    <property type="resolution" value="1.94 A"/>
    <property type="chains" value="AAA/BBB=1-299"/>
</dbReference>
<dbReference type="PDB" id="6I4A">
    <property type="method" value="X-ray"/>
    <property type="resolution" value="2.25 A"/>
    <property type="chains" value="AAA=1-299"/>
</dbReference>
<dbReference type="PDB" id="6MAE">
    <property type="method" value="X-ray"/>
    <property type="resolution" value="1.80 A"/>
    <property type="chains" value="A=1-299"/>
</dbReference>
<dbReference type="PDB" id="6MO4">
    <property type="method" value="X-ray"/>
    <property type="resolution" value="1.84 A"/>
    <property type="chains" value="A=2-299"/>
</dbReference>
<dbReference type="PDB" id="6MO5">
    <property type="method" value="X-ray"/>
    <property type="resolution" value="1.85 A"/>
    <property type="chains" value="A=2-299"/>
</dbReference>
<dbReference type="PDB" id="6MOD">
    <property type="method" value="X-ray"/>
    <property type="resolution" value="1.85 A"/>
    <property type="chains" value="A=2-299"/>
</dbReference>
<dbReference type="PDB" id="6MOO">
    <property type="method" value="X-ray"/>
    <property type="resolution" value="2.20 A"/>
    <property type="chains" value="A=2-299"/>
</dbReference>
<dbReference type="PDB" id="7CI4">
    <property type="method" value="X-ray"/>
    <property type="resolution" value="2.00 A"/>
    <property type="chains" value="A/B=1-299"/>
</dbReference>
<dbReference type="PDB" id="7CI5">
    <property type="method" value="X-ray"/>
    <property type="resolution" value="2.50 A"/>
    <property type="chains" value="A/B/C/D=1-299"/>
</dbReference>
<dbReference type="PDB" id="7CI6">
    <property type="method" value="X-ray"/>
    <property type="resolution" value="2.70 A"/>
    <property type="chains" value="A/B=1-299"/>
</dbReference>
<dbReference type="PDB" id="7CI7">
    <property type="method" value="X-ray"/>
    <property type="resolution" value="2.10 A"/>
    <property type="chains" value="A=1-299"/>
</dbReference>
<dbReference type="PDB" id="7CI8">
    <property type="method" value="X-ray"/>
    <property type="resolution" value="3.00 A"/>
    <property type="chains" value="A/B=1-299"/>
</dbReference>
<dbReference type="PDB" id="7CI9">
    <property type="method" value="X-ray"/>
    <property type="resolution" value="1.90 A"/>
    <property type="chains" value="A=1-299"/>
</dbReference>
<dbReference type="PDB" id="7CIA">
    <property type="method" value="X-ray"/>
    <property type="resolution" value="1.92 A"/>
    <property type="chains" value="A=1-299"/>
</dbReference>
<dbReference type="PDB" id="7CIB">
    <property type="method" value="X-ray"/>
    <property type="resolution" value="1.61 A"/>
    <property type="chains" value="A=1-299"/>
</dbReference>
<dbReference type="PDB" id="7CIC">
    <property type="method" value="X-ray"/>
    <property type="resolution" value="1.78 A"/>
    <property type="chains" value="A/B=1-299"/>
</dbReference>
<dbReference type="PDB" id="7CID">
    <property type="method" value="X-ray"/>
    <property type="resolution" value="2.49 A"/>
    <property type="chains" value="A=1-299"/>
</dbReference>
<dbReference type="PDB" id="7CIE">
    <property type="method" value="X-ray"/>
    <property type="resolution" value="2.15 A"/>
    <property type="chains" value="A/B=1-299"/>
</dbReference>
<dbReference type="PDB" id="7DEL">
    <property type="method" value="X-ray"/>
    <property type="resolution" value="2.15 A"/>
    <property type="chains" value="A=1-299"/>
</dbReference>
<dbReference type="PDB" id="7DEM">
    <property type="method" value="X-ray"/>
    <property type="resolution" value="1.90 A"/>
    <property type="chains" value="A=1-299"/>
</dbReference>
<dbReference type="PDB" id="7DEN">
    <property type="method" value="X-ray"/>
    <property type="resolution" value="2.07 A"/>
    <property type="chains" value="A=1-299"/>
</dbReference>
<dbReference type="PDB" id="7K99">
    <property type="method" value="X-ray"/>
    <property type="resolution" value="1.90 A"/>
    <property type="chains" value="A/C=1-303"/>
</dbReference>
<dbReference type="PDB" id="7K9A">
    <property type="method" value="X-ray"/>
    <property type="resolution" value="2.00 A"/>
    <property type="chains" value="A/C=1-303"/>
</dbReference>
<dbReference type="PDB" id="7PHN">
    <property type="method" value="X-ray"/>
    <property type="resolution" value="1.90 A"/>
    <property type="chains" value="A=1-299"/>
</dbReference>
<dbReference type="PDB" id="7PJ2">
    <property type="method" value="X-ray"/>
    <property type="resolution" value="1.80 A"/>
    <property type="chains" value="A=1-299"/>
</dbReference>
<dbReference type="PDB" id="7PJG">
    <property type="method" value="X-ray"/>
    <property type="resolution" value="2.04 A"/>
    <property type="chains" value="A=1-299"/>
</dbReference>
<dbReference type="PDB" id="7PK8">
    <property type="method" value="X-ray"/>
    <property type="resolution" value="2.30 A"/>
    <property type="chains" value="A=1-299"/>
</dbReference>
<dbReference type="PDB" id="7PKK">
    <property type="method" value="X-ray"/>
    <property type="resolution" value="2.55 A"/>
    <property type="chains" value="A=1-299"/>
</dbReference>
<dbReference type="PDB" id="7PKM">
    <property type="method" value="X-ray"/>
    <property type="resolution" value="2.10 A"/>
    <property type="chains" value="A=1-299"/>
</dbReference>
<dbReference type="PDB" id="7PZS">
    <property type="method" value="X-ray"/>
    <property type="resolution" value="2.45 A"/>
    <property type="chains" value="A=1-299"/>
</dbReference>
<dbReference type="PDB" id="7PZU">
    <property type="method" value="X-ray"/>
    <property type="resolution" value="2.15 A"/>
    <property type="chains" value="A=1-299"/>
</dbReference>
<dbReference type="PDB" id="7PZV">
    <property type="method" value="X-ray"/>
    <property type="resolution" value="1.92 A"/>
    <property type="chains" value="A=1-299"/>
</dbReference>
<dbReference type="PDB" id="7PZW">
    <property type="method" value="X-ray"/>
    <property type="resolution" value="2.00 A"/>
    <property type="chains" value="A=1-299"/>
</dbReference>
<dbReference type="PDB" id="7PZX">
    <property type="method" value="X-ray"/>
    <property type="resolution" value="2.39 A"/>
    <property type="chains" value="A=1-299"/>
</dbReference>
<dbReference type="PDB" id="7Q01">
    <property type="method" value="X-ray"/>
    <property type="resolution" value="2.01 A"/>
    <property type="chains" value="A=1-299"/>
</dbReference>
<dbReference type="PDB" id="8E4A">
    <property type="method" value="X-ray"/>
    <property type="resolution" value="2.03 A"/>
    <property type="chains" value="A=1-299"/>
</dbReference>
<dbReference type="PDBsum" id="2VES"/>
<dbReference type="PDBsum" id="3P3E"/>
<dbReference type="PDBsum" id="3U1Y"/>
<dbReference type="PDBsum" id="3UHM"/>
<dbReference type="PDBsum" id="4FW3"/>
<dbReference type="PDBsum" id="4FW4"/>
<dbReference type="PDBsum" id="4FW5"/>
<dbReference type="PDBsum" id="4FW6"/>
<dbReference type="PDBsum" id="4FW7"/>
<dbReference type="PDBsum" id="4J3D"/>
<dbReference type="PDBsum" id="4LCF"/>
<dbReference type="PDBsum" id="4LCG"/>
<dbReference type="PDBsum" id="4LCH"/>
<dbReference type="PDBsum" id="4OKG"/>
<dbReference type="PDBsum" id="5DRQ"/>
<dbReference type="PDBsum" id="5DRR"/>
<dbReference type="PDBsum" id="5N8C"/>
<dbReference type="PDBsum" id="5U39"/>
<dbReference type="PDBsum" id="5U3B"/>
<dbReference type="PDBsum" id="5UPG"/>
<dbReference type="PDBsum" id="5VWM"/>
<dbReference type="PDBsum" id="6C9C"/>
<dbReference type="PDBsum" id="6CAX"/>
<dbReference type="PDBsum" id="6DUI"/>
<dbReference type="PDBsum" id="6E54"/>
<dbReference type="PDBsum" id="6I46"/>
<dbReference type="PDBsum" id="6I47"/>
<dbReference type="PDBsum" id="6I48"/>
<dbReference type="PDBsum" id="6I49"/>
<dbReference type="PDBsum" id="6I4A"/>
<dbReference type="PDBsum" id="6MAE"/>
<dbReference type="PDBsum" id="6MO4"/>
<dbReference type="PDBsum" id="6MO5"/>
<dbReference type="PDBsum" id="6MOD"/>
<dbReference type="PDBsum" id="6MOO"/>
<dbReference type="PDBsum" id="7CI4"/>
<dbReference type="PDBsum" id="7CI5"/>
<dbReference type="PDBsum" id="7CI6"/>
<dbReference type="PDBsum" id="7CI7"/>
<dbReference type="PDBsum" id="7CI8"/>
<dbReference type="PDBsum" id="7CI9"/>
<dbReference type="PDBsum" id="7CIA"/>
<dbReference type="PDBsum" id="7CIB"/>
<dbReference type="PDBsum" id="7CIC"/>
<dbReference type="PDBsum" id="7CID"/>
<dbReference type="PDBsum" id="7CIE"/>
<dbReference type="PDBsum" id="7DEL"/>
<dbReference type="PDBsum" id="7DEM"/>
<dbReference type="PDBsum" id="7DEN"/>
<dbReference type="PDBsum" id="7K99"/>
<dbReference type="PDBsum" id="7K9A"/>
<dbReference type="PDBsum" id="7PHN"/>
<dbReference type="PDBsum" id="7PJ2"/>
<dbReference type="PDBsum" id="7PJG"/>
<dbReference type="PDBsum" id="7PK8"/>
<dbReference type="PDBsum" id="7PKK"/>
<dbReference type="PDBsum" id="7PKM"/>
<dbReference type="PDBsum" id="7PZS"/>
<dbReference type="PDBsum" id="7PZU"/>
<dbReference type="PDBsum" id="7PZV"/>
<dbReference type="PDBsum" id="7PZW"/>
<dbReference type="PDBsum" id="7PZX"/>
<dbReference type="PDBsum" id="7Q01"/>
<dbReference type="PDBsum" id="8E4A"/>
<dbReference type="SMR" id="P47205"/>
<dbReference type="FunCoup" id="P47205">
    <property type="interactions" value="484"/>
</dbReference>
<dbReference type="STRING" id="208964.PA4406"/>
<dbReference type="BindingDB" id="P47205"/>
<dbReference type="ChEMBL" id="CHEMBL3855"/>
<dbReference type="DrugBank" id="DB07861">
    <property type="generic name" value="(2R)-N-hydroxy-3-naphthalen-2-yl-2-[(naphthalen-2-ylsulfonyl)amino]propanamide"/>
</dbReference>
<dbReference type="PaxDb" id="208964-PA4406"/>
<dbReference type="DNASU" id="881292"/>
<dbReference type="GeneID" id="881292"/>
<dbReference type="KEGG" id="pae:PA4406"/>
<dbReference type="PATRIC" id="fig|208964.12.peg.4615"/>
<dbReference type="PseudoCAP" id="PA4406"/>
<dbReference type="HOGENOM" id="CLU_046528_1_0_6"/>
<dbReference type="InParanoid" id="P47205"/>
<dbReference type="OrthoDB" id="9802746at2"/>
<dbReference type="PhylomeDB" id="P47205"/>
<dbReference type="BioCyc" id="PAER208964:G1FZ6-4492-MONOMER"/>
<dbReference type="BRENDA" id="3.5.1.108">
    <property type="organism ID" value="5087"/>
</dbReference>
<dbReference type="UniPathway" id="UPA00359">
    <property type="reaction ID" value="UER00478"/>
</dbReference>
<dbReference type="EvolutionaryTrace" id="P47205"/>
<dbReference type="Proteomes" id="UP000002438">
    <property type="component" value="Chromosome"/>
</dbReference>
<dbReference type="GO" id="GO:0016020">
    <property type="term" value="C:membrane"/>
    <property type="evidence" value="ECO:0007669"/>
    <property type="project" value="GOC"/>
</dbReference>
<dbReference type="GO" id="GO:0046872">
    <property type="term" value="F:metal ion binding"/>
    <property type="evidence" value="ECO:0007669"/>
    <property type="project" value="UniProtKB-KW"/>
</dbReference>
<dbReference type="GO" id="GO:0103117">
    <property type="term" value="F:UDP-3-O-acyl-N-acetylglucosamine deacetylase activity"/>
    <property type="evidence" value="ECO:0000314"/>
    <property type="project" value="PseudoCAP"/>
</dbReference>
<dbReference type="GO" id="GO:0009245">
    <property type="term" value="P:lipid A biosynthetic process"/>
    <property type="evidence" value="ECO:0000314"/>
    <property type="project" value="PseudoCAP"/>
</dbReference>
<dbReference type="FunFam" id="3.30.1700.10:FF:000001">
    <property type="entry name" value="UDP-3-O-acyl-N-acetylglucosamine deacetylase"/>
    <property type="match status" value="1"/>
</dbReference>
<dbReference type="FunFam" id="3.30.230.20:FF:000001">
    <property type="entry name" value="UDP-3-O-acyl-N-acetylglucosamine deacetylase"/>
    <property type="match status" value="1"/>
</dbReference>
<dbReference type="Gene3D" id="3.30.230.20">
    <property type="entry name" value="lpxc deacetylase, domain 1"/>
    <property type="match status" value="1"/>
</dbReference>
<dbReference type="Gene3D" id="3.30.1700.10">
    <property type="entry name" value="lpxc deacetylase, domain 2"/>
    <property type="match status" value="1"/>
</dbReference>
<dbReference type="HAMAP" id="MF_00388">
    <property type="entry name" value="LpxC"/>
    <property type="match status" value="1"/>
</dbReference>
<dbReference type="InterPro" id="IPR020568">
    <property type="entry name" value="Ribosomal_Su5_D2-typ_SF"/>
</dbReference>
<dbReference type="InterPro" id="IPR004463">
    <property type="entry name" value="UDP-acyl_GlcNac_deAcase"/>
</dbReference>
<dbReference type="InterPro" id="IPR011334">
    <property type="entry name" value="UDP-acyl_GlcNac_deAcase_C"/>
</dbReference>
<dbReference type="InterPro" id="IPR015870">
    <property type="entry name" value="UDP-acyl_N-AcGlcN_deAcase_N"/>
</dbReference>
<dbReference type="NCBIfam" id="TIGR00325">
    <property type="entry name" value="lpxC"/>
    <property type="match status" value="1"/>
</dbReference>
<dbReference type="PANTHER" id="PTHR33694">
    <property type="entry name" value="UDP-3-O-ACYL-N-ACETYLGLUCOSAMINE DEACETYLASE 1, MITOCHONDRIAL-RELATED"/>
    <property type="match status" value="1"/>
</dbReference>
<dbReference type="PANTHER" id="PTHR33694:SF1">
    <property type="entry name" value="UDP-3-O-ACYL-N-ACETYLGLUCOSAMINE DEACETYLASE 1, MITOCHONDRIAL-RELATED"/>
    <property type="match status" value="1"/>
</dbReference>
<dbReference type="Pfam" id="PF03331">
    <property type="entry name" value="LpxC"/>
    <property type="match status" value="1"/>
</dbReference>
<dbReference type="SUPFAM" id="SSF54211">
    <property type="entry name" value="Ribosomal protein S5 domain 2-like"/>
    <property type="match status" value="2"/>
</dbReference>
<reference key="1">
    <citation type="submission" date="2000-01" db="EMBL/GenBank/DDBJ databases">
        <authorList>
            <person name="Levesque R.C."/>
        </authorList>
    </citation>
    <scope>NUCLEOTIDE SEQUENCE [GENOMIC DNA]</scope>
    <source>
        <strain>ATCC 15692 / DSM 22644 / CIP 104116 / JCM 14847 / LMG 12228 / 1C / PRS 101 / PAO1</strain>
    </source>
</reference>
<reference key="2">
    <citation type="journal article" date="1997" name="J. Bacteriol.">
        <title>Cloning, expression, and purification of UDP-3-O-acyl-GlcNAc deacetylase from Pseudomonas aeruginosa: a metalloamidase of the lipid A biosynthesis pathway.</title>
        <authorList>
            <person name="Hyland S.A."/>
            <person name="Eveland S.S."/>
            <person name="Anderson M.S."/>
        </authorList>
    </citation>
    <scope>NUCLEOTIDE SEQUENCE [GENOMIC DNA]</scope>
    <scope>FUNCTION</scope>
    <scope>CATALYTIC ACTIVITY</scope>
    <scope>COFACTOR</scope>
    <source>
        <strain>ATCC 27853 / DSM 1117 / JCM 6119 / LMG 6395 / NCIMB 12469</strain>
    </source>
</reference>
<reference key="3">
    <citation type="journal article" date="2000" name="Nature">
        <title>Complete genome sequence of Pseudomonas aeruginosa PAO1, an opportunistic pathogen.</title>
        <authorList>
            <person name="Stover C.K."/>
            <person name="Pham X.-Q.T."/>
            <person name="Erwin A.L."/>
            <person name="Mizoguchi S.D."/>
            <person name="Warrener P."/>
            <person name="Hickey M.J."/>
            <person name="Brinkman F.S.L."/>
            <person name="Hufnagle W.O."/>
            <person name="Kowalik D.J."/>
            <person name="Lagrou M."/>
            <person name="Garber R.L."/>
            <person name="Goltry L."/>
            <person name="Tolentino E."/>
            <person name="Westbrock-Wadman S."/>
            <person name="Yuan Y."/>
            <person name="Brody L.L."/>
            <person name="Coulter S.N."/>
            <person name="Folger K.R."/>
            <person name="Kas A."/>
            <person name="Larbig K."/>
            <person name="Lim R.M."/>
            <person name="Smith K.A."/>
            <person name="Spencer D.H."/>
            <person name="Wong G.K.-S."/>
            <person name="Wu Z."/>
            <person name="Paulsen I.T."/>
            <person name="Reizer J."/>
            <person name="Saier M.H. Jr."/>
            <person name="Hancock R.E.W."/>
            <person name="Lory S."/>
            <person name="Olson M.V."/>
        </authorList>
    </citation>
    <scope>NUCLEOTIDE SEQUENCE [LARGE SCALE GENOMIC DNA]</scope>
    <source>
        <strain>ATCC 15692 / DSM 22644 / CIP 104116 / JCM 14847 / LMG 12228 / 1C / PRS 101 / PAO1</strain>
    </source>
</reference>
<reference key="4">
    <citation type="journal article" date="1996" name="Microbiology">
        <title>Physical mapping of 32 genetic markers on the Pseudomonas aeruginosa PAO1 chromosome.</title>
        <authorList>
            <person name="Liao X."/>
            <person name="Charlebois I."/>
            <person name="Ouellet C."/>
            <person name="Morency M.J."/>
            <person name="Dewar K."/>
            <person name="Lightfoot J."/>
            <person name="Foster J."/>
            <person name="Siehnel R."/>
            <person name="Schweizer H."/>
            <person name="Lam J.S."/>
            <person name="Hancock R.E."/>
            <person name="Levesque R.C."/>
        </authorList>
    </citation>
    <scope>PRELIMINARY NUCLEOTIDE SEQUENCE [GENOMIC DNA] OF 1-42</scope>
    <source>
        <strain>ATCC 15692 / DSM 22644 / CIP 104116 / JCM 14847 / LMG 12228 / 1C / PRS 101 / PAO1</strain>
    </source>
</reference>
<protein>
    <recommendedName>
        <fullName evidence="1">UDP-3-O-acyl-N-acetylglucosamine deacetylase</fullName>
        <shortName evidence="1">UDP-3-O-acyl-GlcNAc deacetylase</shortName>
        <ecNumber evidence="1 2">3.5.1.108</ecNumber>
    </recommendedName>
    <alternativeName>
        <fullName evidence="1">UDP-3-O-[R-3-hydroxymyristoyl]-N-acetylglucosamine deacetylase</fullName>
    </alternativeName>
</protein>
<accession>P47205</accession>
<accession>P97050</accession>
<comment type="function">
    <text evidence="1 2">Catalyzes the hydrolysis of UDP-3-O-myristoyl-N-acetylglucosamine to form UDP-3-O-myristoylglucosamine and acetate, the committed step in lipid A biosynthesis.</text>
</comment>
<comment type="catalytic activity">
    <reaction evidence="1 2">
        <text>a UDP-3-O-[(3R)-3-hydroxyacyl]-N-acetyl-alpha-D-glucosamine + H2O = a UDP-3-O-[(3R)-3-hydroxyacyl]-alpha-D-glucosamine + acetate</text>
        <dbReference type="Rhea" id="RHEA:67816"/>
        <dbReference type="ChEBI" id="CHEBI:15377"/>
        <dbReference type="ChEBI" id="CHEBI:30089"/>
        <dbReference type="ChEBI" id="CHEBI:137740"/>
        <dbReference type="ChEBI" id="CHEBI:173225"/>
        <dbReference type="EC" id="3.5.1.108"/>
    </reaction>
</comment>
<comment type="cofactor">
    <cofactor evidence="1 2">
        <name>Zn(2+)</name>
        <dbReference type="ChEBI" id="CHEBI:29105"/>
    </cofactor>
</comment>
<comment type="pathway">
    <text evidence="1">Glycolipid biosynthesis; lipid IV(A) biosynthesis; lipid IV(A) from (3R)-3-hydroxytetradecanoyl-[acyl-carrier-protein] and UDP-N-acetyl-alpha-D-glucosamine: step 2/6.</text>
</comment>
<comment type="similarity">
    <text evidence="1">Belongs to the LpxC family.</text>
</comment>
<feature type="chain" id="PRO_0000191945" description="UDP-3-O-acyl-N-acetylglucosamine deacetylase">
    <location>
        <begin position="1"/>
        <end position="303"/>
    </location>
</feature>
<feature type="active site" description="Proton donor" evidence="1">
    <location>
        <position position="264"/>
    </location>
</feature>
<feature type="binding site" evidence="1">
    <location>
        <position position="78"/>
    </location>
    <ligand>
        <name>Zn(2+)</name>
        <dbReference type="ChEBI" id="CHEBI:29105"/>
    </ligand>
</feature>
<feature type="binding site" evidence="1">
    <location>
        <position position="237"/>
    </location>
    <ligand>
        <name>Zn(2+)</name>
        <dbReference type="ChEBI" id="CHEBI:29105"/>
    </ligand>
</feature>
<feature type="binding site" evidence="1">
    <location>
        <position position="241"/>
    </location>
    <ligand>
        <name>Zn(2+)</name>
        <dbReference type="ChEBI" id="CHEBI:29105"/>
    </ligand>
</feature>
<feature type="strand" evidence="3">
    <location>
        <begin position="3"/>
        <end position="9"/>
    </location>
</feature>
<feature type="strand" evidence="3">
    <location>
        <begin position="11"/>
        <end position="16"/>
    </location>
</feature>
<feature type="turn" evidence="3">
    <location>
        <begin position="18"/>
        <end position="20"/>
    </location>
</feature>
<feature type="strand" evidence="3">
    <location>
        <begin position="23"/>
        <end position="29"/>
    </location>
</feature>
<feature type="strand" evidence="3">
    <location>
        <begin position="37"/>
        <end position="41"/>
    </location>
</feature>
<feature type="strand" evidence="3">
    <location>
        <begin position="44"/>
        <end position="46"/>
    </location>
</feature>
<feature type="strand" evidence="3">
    <location>
        <begin position="48"/>
        <end position="51"/>
    </location>
</feature>
<feature type="helix" evidence="3">
    <location>
        <begin position="54"/>
        <end position="56"/>
    </location>
</feature>
<feature type="strand" evidence="3">
    <location>
        <begin position="57"/>
        <end position="59"/>
    </location>
</feature>
<feature type="strand" evidence="3">
    <location>
        <begin position="61"/>
        <end position="63"/>
    </location>
</feature>
<feature type="strand" evidence="3">
    <location>
        <begin position="65"/>
        <end position="68"/>
    </location>
</feature>
<feature type="strand" evidence="3">
    <location>
        <begin position="71"/>
        <end position="74"/>
    </location>
</feature>
<feature type="helix" evidence="3">
    <location>
        <begin position="77"/>
        <end position="85"/>
    </location>
</feature>
<feature type="strand" evidence="3">
    <location>
        <begin position="91"/>
        <end position="99"/>
    </location>
</feature>
<feature type="strand" evidence="3">
    <location>
        <begin position="105"/>
        <end position="107"/>
    </location>
</feature>
<feature type="helix" evidence="3">
    <location>
        <begin position="108"/>
        <end position="117"/>
    </location>
</feature>
<feature type="strand" evidence="3">
    <location>
        <begin position="119"/>
        <end position="125"/>
    </location>
</feature>
<feature type="strand" evidence="3">
    <location>
        <begin position="128"/>
        <end position="131"/>
    </location>
</feature>
<feature type="strand" evidence="3">
    <location>
        <begin position="135"/>
        <end position="139"/>
    </location>
</feature>
<feature type="strand" evidence="3">
    <location>
        <begin position="142"/>
        <end position="147"/>
    </location>
</feature>
<feature type="strand" evidence="3">
    <location>
        <begin position="150"/>
        <end position="158"/>
    </location>
</feature>
<feature type="helix" evidence="3">
    <location>
        <begin position="163"/>
        <end position="165"/>
    </location>
</feature>
<feature type="strand" evidence="3">
    <location>
        <begin position="170"/>
        <end position="175"/>
    </location>
</feature>
<feature type="helix" evidence="3">
    <location>
        <begin position="178"/>
        <end position="184"/>
    </location>
</feature>
<feature type="turn" evidence="3">
    <location>
        <begin position="185"/>
        <end position="187"/>
    </location>
</feature>
<feature type="strand" evidence="3">
    <location>
        <begin position="191"/>
        <end position="193"/>
    </location>
</feature>
<feature type="helix" evidence="3">
    <location>
        <begin position="194"/>
        <end position="196"/>
    </location>
</feature>
<feature type="helix" evidence="3">
    <location>
        <begin position="197"/>
        <end position="203"/>
    </location>
</feature>
<feature type="turn" evidence="3">
    <location>
        <begin position="211"/>
        <end position="213"/>
    </location>
</feature>
<feature type="strand" evidence="3">
    <location>
        <begin position="214"/>
        <end position="217"/>
    </location>
</feature>
<feature type="strand" evidence="3">
    <location>
        <begin position="219"/>
        <end position="222"/>
    </location>
</feature>
<feature type="helix" evidence="4">
    <location>
        <begin position="225"/>
        <end position="227"/>
    </location>
</feature>
<feature type="helix" evidence="3">
    <location>
        <begin position="233"/>
        <end position="247"/>
    </location>
</feature>
<feature type="strand" evidence="3">
    <location>
        <begin position="250"/>
        <end position="261"/>
    </location>
</feature>
<feature type="helix" evidence="3">
    <location>
        <begin position="264"/>
        <end position="276"/>
    </location>
</feature>
<feature type="helix" evidence="3">
    <location>
        <begin position="278"/>
        <end position="280"/>
    </location>
</feature>
<feature type="strand" evidence="3">
    <location>
        <begin position="281"/>
        <end position="284"/>
    </location>
</feature>
<feature type="helix" evidence="3">
    <location>
        <begin position="289"/>
        <end position="291"/>
    </location>
</feature>